<name>FETUB_MOUSE</name>
<dbReference type="EMBL" id="AJ242927">
    <property type="protein sequence ID" value="CAB62541.1"/>
    <property type="molecule type" value="mRNA"/>
</dbReference>
<dbReference type="EMBL" id="BC018341">
    <property type="protein sequence ID" value="AAH18341.1"/>
    <property type="molecule type" value="mRNA"/>
</dbReference>
<dbReference type="CCDS" id="CCDS37300.1"/>
<dbReference type="RefSeq" id="NP_001077373.1">
    <property type="nucleotide sequence ID" value="NM_001083904.1"/>
</dbReference>
<dbReference type="RefSeq" id="NP_001077374.1">
    <property type="nucleotide sequence ID" value="NM_001083905.1"/>
</dbReference>
<dbReference type="RefSeq" id="NP_067539.1">
    <property type="nucleotide sequence ID" value="NM_021564.2"/>
</dbReference>
<dbReference type="PDB" id="6HPV">
    <property type="method" value="X-ray"/>
    <property type="resolution" value="2.30 A"/>
    <property type="chains" value="A=19-388"/>
</dbReference>
<dbReference type="PDB" id="6HT9">
    <property type="method" value="X-ray"/>
    <property type="resolution" value="3.10 A"/>
    <property type="chains" value="B/D=19-388"/>
</dbReference>
<dbReference type="PDB" id="7AUW">
    <property type="method" value="X-ray"/>
    <property type="resolution" value="2.80 A"/>
    <property type="chains" value="B/D=1-388"/>
</dbReference>
<dbReference type="PDBsum" id="6HPV"/>
<dbReference type="PDBsum" id="6HT9"/>
<dbReference type="PDBsum" id="7AUW"/>
<dbReference type="SMR" id="Q9QXC1"/>
<dbReference type="BioGRID" id="208524">
    <property type="interactions" value="3"/>
</dbReference>
<dbReference type="FunCoup" id="Q9QXC1">
    <property type="interactions" value="376"/>
</dbReference>
<dbReference type="STRING" id="10090.ENSMUSP00000155898"/>
<dbReference type="MEROPS" id="I25.067"/>
<dbReference type="GlyCosmos" id="Q9QXC1">
    <property type="glycosylation" value="4 sites, No reported glycans"/>
</dbReference>
<dbReference type="GlyGen" id="Q9QXC1">
    <property type="glycosylation" value="4 sites, 1 N-linked glycan (1 site)"/>
</dbReference>
<dbReference type="iPTMnet" id="Q9QXC1"/>
<dbReference type="PhosphoSitePlus" id="Q9QXC1"/>
<dbReference type="CPTAC" id="non-CPTAC-3371"/>
<dbReference type="CPTAC" id="non-CPTAC-3372"/>
<dbReference type="jPOST" id="Q9QXC1"/>
<dbReference type="PaxDb" id="10090-ENSMUSP00000023587"/>
<dbReference type="ProteomicsDB" id="271743"/>
<dbReference type="Antibodypedia" id="33852">
    <property type="antibodies" value="292 antibodies from 28 providers"/>
</dbReference>
<dbReference type="DNASU" id="59083"/>
<dbReference type="Ensembl" id="ENSMUST00000023587.12">
    <property type="protein sequence ID" value="ENSMUSP00000023587.5"/>
    <property type="gene ID" value="ENSMUSG00000022871.14"/>
</dbReference>
<dbReference type="Ensembl" id="ENSMUST00000167399.2">
    <property type="protein sequence ID" value="ENSMUSP00000128745.2"/>
    <property type="gene ID" value="ENSMUSG00000022871.14"/>
</dbReference>
<dbReference type="Ensembl" id="ENSMUST00000170805.9">
    <property type="protein sequence ID" value="ENSMUSP00000128989.2"/>
    <property type="gene ID" value="ENSMUSG00000022871.14"/>
</dbReference>
<dbReference type="Ensembl" id="ENSMUST00000231768.2">
    <property type="protein sequence ID" value="ENSMUSP00000156347.2"/>
    <property type="gene ID" value="ENSMUSG00000022871.14"/>
</dbReference>
<dbReference type="Ensembl" id="ENSMUST00000232097.2">
    <property type="protein sequence ID" value="ENSMUSP00000155898.2"/>
    <property type="gene ID" value="ENSMUSG00000022871.14"/>
</dbReference>
<dbReference type="GeneID" id="59083"/>
<dbReference type="KEGG" id="mmu:59083"/>
<dbReference type="UCSC" id="uc007yss.1">
    <property type="organism name" value="mouse"/>
</dbReference>
<dbReference type="AGR" id="MGI:1890221"/>
<dbReference type="CTD" id="26998"/>
<dbReference type="MGI" id="MGI:1890221">
    <property type="gene designation" value="Fetub"/>
</dbReference>
<dbReference type="VEuPathDB" id="HostDB:ENSMUSG00000022871"/>
<dbReference type="eggNOG" id="ENOG502S28K">
    <property type="taxonomic scope" value="Eukaryota"/>
</dbReference>
<dbReference type="GeneTree" id="ENSGT00950000182930"/>
<dbReference type="InParanoid" id="Q9QXC1"/>
<dbReference type="OMA" id="NCQFAHR"/>
<dbReference type="OrthoDB" id="9941887at2759"/>
<dbReference type="PhylomeDB" id="Q9QXC1"/>
<dbReference type="TreeFam" id="TF333729"/>
<dbReference type="BioGRID-ORCS" id="59083">
    <property type="hits" value="2 hits in 77 CRISPR screens"/>
</dbReference>
<dbReference type="ChiTaRS" id="Fetub">
    <property type="organism name" value="mouse"/>
</dbReference>
<dbReference type="PRO" id="PR:Q9QXC1"/>
<dbReference type="Proteomes" id="UP000000589">
    <property type="component" value="Chromosome 16"/>
</dbReference>
<dbReference type="RNAct" id="Q9QXC1">
    <property type="molecule type" value="protein"/>
</dbReference>
<dbReference type="Bgee" id="ENSMUSG00000022871">
    <property type="expression patterns" value="Expressed in olfactory epithelium and 74 other cell types or tissues"/>
</dbReference>
<dbReference type="ExpressionAtlas" id="Q9QXC1">
    <property type="expression patterns" value="baseline and differential"/>
</dbReference>
<dbReference type="GO" id="GO:0005576">
    <property type="term" value="C:extracellular region"/>
    <property type="evidence" value="ECO:0000304"/>
    <property type="project" value="UniProtKB"/>
</dbReference>
<dbReference type="GO" id="GO:0005615">
    <property type="term" value="C:extracellular space"/>
    <property type="evidence" value="ECO:0007669"/>
    <property type="project" value="InterPro"/>
</dbReference>
<dbReference type="GO" id="GO:0004869">
    <property type="term" value="F:cysteine-type endopeptidase inhibitor activity"/>
    <property type="evidence" value="ECO:0007669"/>
    <property type="project" value="InterPro"/>
</dbReference>
<dbReference type="GO" id="GO:0008191">
    <property type="term" value="F:metalloendopeptidase inhibitor activity"/>
    <property type="evidence" value="ECO:0000314"/>
    <property type="project" value="UniProtKB"/>
</dbReference>
<dbReference type="GO" id="GO:0007339">
    <property type="term" value="P:binding of sperm to zona pellucida"/>
    <property type="evidence" value="ECO:0000315"/>
    <property type="project" value="UniProtKB"/>
</dbReference>
<dbReference type="GO" id="GO:0010951">
    <property type="term" value="P:negative regulation of endopeptidase activity"/>
    <property type="evidence" value="ECO:0000314"/>
    <property type="project" value="UniProtKB"/>
</dbReference>
<dbReference type="GO" id="GO:0007338">
    <property type="term" value="P:single fertilization"/>
    <property type="evidence" value="ECO:0000315"/>
    <property type="project" value="UniProtKB"/>
</dbReference>
<dbReference type="CDD" id="cd00042">
    <property type="entry name" value="CY"/>
    <property type="match status" value="2"/>
</dbReference>
<dbReference type="FunFam" id="3.10.450.10:FF:000037">
    <property type="entry name" value="Fetuin-B"/>
    <property type="match status" value="1"/>
</dbReference>
<dbReference type="FunFam" id="3.10.450.10:FF:000005">
    <property type="entry name" value="Histidine-rich glycoprotein"/>
    <property type="match status" value="1"/>
</dbReference>
<dbReference type="Gene3D" id="3.10.450.10">
    <property type="match status" value="2"/>
</dbReference>
<dbReference type="InterPro" id="IPR000010">
    <property type="entry name" value="Cystatin_dom"/>
</dbReference>
<dbReference type="InterPro" id="IPR025764">
    <property type="entry name" value="Cystatin_Fetuin_B"/>
</dbReference>
<dbReference type="InterPro" id="IPR046350">
    <property type="entry name" value="Cystatin_sf"/>
</dbReference>
<dbReference type="InterPro" id="IPR050735">
    <property type="entry name" value="Kininogen_Fetuin_HRG"/>
</dbReference>
<dbReference type="InterPro" id="IPR001363">
    <property type="entry name" value="Prot_inh_fetuin_CS"/>
</dbReference>
<dbReference type="PANTHER" id="PTHR13814">
    <property type="entry name" value="FETUIN"/>
    <property type="match status" value="1"/>
</dbReference>
<dbReference type="PANTHER" id="PTHR13814:SF10">
    <property type="entry name" value="FETUIN-B"/>
    <property type="match status" value="1"/>
</dbReference>
<dbReference type="Pfam" id="PF00031">
    <property type="entry name" value="Cystatin"/>
    <property type="match status" value="2"/>
</dbReference>
<dbReference type="SMART" id="SM00043">
    <property type="entry name" value="CY"/>
    <property type="match status" value="2"/>
</dbReference>
<dbReference type="SUPFAM" id="SSF54403">
    <property type="entry name" value="Cystatin/monellin"/>
    <property type="match status" value="2"/>
</dbReference>
<dbReference type="PROSITE" id="PS51530">
    <property type="entry name" value="CYSTATIN_FETUIN_B"/>
    <property type="match status" value="2"/>
</dbReference>
<dbReference type="PROSITE" id="PS01254">
    <property type="entry name" value="FETUIN_1"/>
    <property type="match status" value="1"/>
</dbReference>
<dbReference type="PROSITE" id="PS01255">
    <property type="entry name" value="FETUIN_2"/>
    <property type="match status" value="1"/>
</dbReference>
<comment type="function">
    <text evidence="7">Protease inhibitor required for egg fertilization. Required to prevent premature zona pellucida hardening before fertilization, probably by inhibiting the protease activity of ASTL, a protease that mediates the cleavage of ZP2 and triggers zona pellucida hardening.</text>
</comment>
<comment type="subcellular location">
    <subcellularLocation>
        <location evidence="8">Secreted</location>
    </subcellularLocation>
</comment>
<comment type="tissue specificity">
    <text>Liver, lung and tongue.</text>
</comment>
<comment type="disruption phenotype">
    <text evidence="7">Female infertility due to a block early in fertilization. Oocytes undergo premature zona pellucida hardening.</text>
</comment>
<comment type="similarity">
    <text evidence="4">Belongs to the fetuin family.</text>
</comment>
<organism>
    <name type="scientific">Mus musculus</name>
    <name type="common">Mouse</name>
    <dbReference type="NCBI Taxonomy" id="10090"/>
    <lineage>
        <taxon>Eukaryota</taxon>
        <taxon>Metazoa</taxon>
        <taxon>Chordata</taxon>
        <taxon>Craniata</taxon>
        <taxon>Vertebrata</taxon>
        <taxon>Euteleostomi</taxon>
        <taxon>Mammalia</taxon>
        <taxon>Eutheria</taxon>
        <taxon>Euarchontoglires</taxon>
        <taxon>Glires</taxon>
        <taxon>Rodentia</taxon>
        <taxon>Myomorpha</taxon>
        <taxon>Muroidea</taxon>
        <taxon>Muridae</taxon>
        <taxon>Murinae</taxon>
        <taxon>Mus</taxon>
        <taxon>Mus</taxon>
    </lineage>
</organism>
<gene>
    <name type="primary">Fetub</name>
</gene>
<accession>Q9QXC1</accession>
<sequence>MGLLRLLVLCTLAACCMARSPPAPPLPQRPLSPLHPLGCNDSEVLAVAGFALQNINRDQKDGYMLSLNRVHDVREHYQEDMGSLFYLTLDVLETDCHVLSRKAQKDCKPRMFYESVYGQCKAMFHINKPRRVLYLPAYNCTLRPVSKRKTHTTCPDCPSPIDLSNPSALEAATESLAKFNSKSPSKKYELVKVTKAMNQWVSGPAYYVEYLIKEAPCTKSQASCSLQHSDSEPVGICQGSTVQSSLRHVPLIQPVEKSVTVTCEFFESQAQVPGDENPAVTQGPQKLPQKNTAPTSSPSVTAPRGSIQHLPELDDEKPEESKGGSPEEAFPVQLDLTTNPQGDTLDVSFLYLEPGDKKLVVLPFPGKEQRSAECPGPEKENNPLVLPP</sequence>
<evidence type="ECO:0000250" key="1">
    <source>
        <dbReference type="UniProtKB" id="Q58D62"/>
    </source>
</evidence>
<evidence type="ECO:0000250" key="2">
    <source>
        <dbReference type="UniProtKB" id="Q9UGM5"/>
    </source>
</evidence>
<evidence type="ECO:0000255" key="3"/>
<evidence type="ECO:0000255" key="4">
    <source>
        <dbReference type="PROSITE-ProRule" id="PRU00862"/>
    </source>
</evidence>
<evidence type="ECO:0000256" key="5">
    <source>
        <dbReference type="SAM" id="MobiDB-lite"/>
    </source>
</evidence>
<evidence type="ECO:0000269" key="6">
    <source>
    </source>
</evidence>
<evidence type="ECO:0000269" key="7">
    <source>
    </source>
</evidence>
<evidence type="ECO:0000305" key="8">
    <source>
    </source>
</evidence>
<evidence type="ECO:0007829" key="9">
    <source>
        <dbReference type="PDB" id="6HPV"/>
    </source>
</evidence>
<evidence type="ECO:0007829" key="10">
    <source>
        <dbReference type="PDB" id="6HT9"/>
    </source>
</evidence>
<evidence type="ECO:0007829" key="11">
    <source>
        <dbReference type="PDB" id="7AUW"/>
    </source>
</evidence>
<feature type="signal peptide" evidence="3">
    <location>
        <begin position="1"/>
        <end position="18"/>
    </location>
</feature>
<feature type="chain" id="PRO_0000008900" description="Fetuin-B">
    <location>
        <begin position="19"/>
        <end position="388"/>
    </location>
</feature>
<feature type="domain" description="Cystatin fetuin-B-type 1" evidence="4">
    <location>
        <begin position="28"/>
        <end position="141"/>
    </location>
</feature>
<feature type="domain" description="Cystatin fetuin-B-type 2" evidence="4">
    <location>
        <begin position="152"/>
        <end position="264"/>
    </location>
</feature>
<feature type="region of interest" description="Disordered" evidence="5">
    <location>
        <begin position="270"/>
        <end position="343"/>
    </location>
</feature>
<feature type="region of interest" description="Disordered" evidence="5">
    <location>
        <begin position="367"/>
        <end position="388"/>
    </location>
</feature>
<feature type="compositionally biased region" description="Polar residues" evidence="5">
    <location>
        <begin position="279"/>
        <end position="300"/>
    </location>
</feature>
<feature type="compositionally biased region" description="Basic and acidic residues" evidence="5">
    <location>
        <begin position="367"/>
        <end position="381"/>
    </location>
</feature>
<feature type="modified residue" description="Phosphoserine" evidence="2">
    <location>
        <position position="321"/>
    </location>
</feature>
<feature type="glycosylation site" description="N-linked (GlcNAc...) asparagine" evidence="3">
    <location>
        <position position="40"/>
    </location>
</feature>
<feature type="glycosylation site" description="N-linked (GlcNAc...) asparagine" evidence="6">
    <location>
        <position position="139"/>
    </location>
</feature>
<feature type="glycosylation site" description="O-linked (GalNAc...) threonine" evidence="1">
    <location>
        <position position="292"/>
    </location>
</feature>
<feature type="glycosylation site" description="O-linked (GalNAc...) threonine" evidence="1">
    <location>
        <position position="295"/>
    </location>
</feature>
<feature type="disulfide bond" evidence="4">
    <location>
        <begin position="96"/>
        <end position="107"/>
    </location>
</feature>
<feature type="disulfide bond" evidence="4">
    <location>
        <begin position="120"/>
        <end position="140"/>
    </location>
</feature>
<feature type="disulfide bond" evidence="4">
    <location>
        <begin position="154"/>
        <end position="157"/>
    </location>
</feature>
<feature type="disulfide bond" evidence="4">
    <location>
        <begin position="217"/>
        <end position="224"/>
    </location>
</feature>
<feature type="disulfide bond" evidence="4">
    <location>
        <begin position="237"/>
        <end position="263"/>
    </location>
</feature>
<feature type="strand" evidence="11">
    <location>
        <begin position="33"/>
        <end position="37"/>
    </location>
</feature>
<feature type="helix" evidence="9">
    <location>
        <begin position="42"/>
        <end position="58"/>
    </location>
</feature>
<feature type="strand" evidence="9">
    <location>
        <begin position="61"/>
        <end position="77"/>
    </location>
</feature>
<feature type="helix" evidence="11">
    <location>
        <begin position="79"/>
        <end position="81"/>
    </location>
</feature>
<feature type="strand" evidence="9">
    <location>
        <begin position="83"/>
        <end position="97"/>
    </location>
</feature>
<feature type="helix" evidence="9">
    <location>
        <begin position="98"/>
        <end position="100"/>
    </location>
</feature>
<feature type="helix" evidence="9">
    <location>
        <begin position="104"/>
        <end position="106"/>
    </location>
</feature>
<feature type="helix" evidence="9">
    <location>
        <begin position="112"/>
        <end position="114"/>
    </location>
</feature>
<feature type="strand" evidence="9">
    <location>
        <begin position="116"/>
        <end position="127"/>
    </location>
</feature>
<feature type="turn" evidence="9">
    <location>
        <begin position="128"/>
        <end position="131"/>
    </location>
</feature>
<feature type="strand" evidence="9">
    <location>
        <begin position="132"/>
        <end position="144"/>
    </location>
</feature>
<feature type="helix" evidence="9">
    <location>
        <begin position="147"/>
        <end position="153"/>
    </location>
</feature>
<feature type="helix" evidence="9">
    <location>
        <begin position="166"/>
        <end position="181"/>
    </location>
</feature>
<feature type="strand" evidence="9">
    <location>
        <begin position="188"/>
        <end position="214"/>
    </location>
</feature>
<feature type="turn" evidence="11">
    <location>
        <begin position="217"/>
        <end position="220"/>
    </location>
</feature>
<feature type="strand" evidence="9">
    <location>
        <begin position="231"/>
        <end position="242"/>
    </location>
</feature>
<feature type="strand" evidence="9">
    <location>
        <begin position="258"/>
        <end position="265"/>
    </location>
</feature>
<feature type="strand" evidence="10">
    <location>
        <begin position="268"/>
        <end position="270"/>
    </location>
</feature>
<feature type="strand" evidence="9">
    <location>
        <begin position="304"/>
        <end position="309"/>
    </location>
</feature>
<feature type="strand" evidence="11">
    <location>
        <begin position="313"/>
        <end position="317"/>
    </location>
</feature>
<feature type="strand" evidence="10">
    <location>
        <begin position="325"/>
        <end position="330"/>
    </location>
</feature>
<feature type="strand" evidence="11">
    <location>
        <begin position="338"/>
        <end position="341"/>
    </location>
</feature>
<feature type="strand" evidence="9">
    <location>
        <begin position="343"/>
        <end position="346"/>
    </location>
</feature>
<feature type="helix" evidence="9">
    <location>
        <begin position="348"/>
        <end position="350"/>
    </location>
</feature>
<feature type="strand" evidence="9">
    <location>
        <begin position="351"/>
        <end position="355"/>
    </location>
</feature>
<feature type="strand" evidence="9">
    <location>
        <begin position="358"/>
        <end position="361"/>
    </location>
</feature>
<feature type="strand" evidence="9">
    <location>
        <begin position="367"/>
        <end position="369"/>
    </location>
</feature>
<feature type="turn" evidence="9">
    <location>
        <begin position="383"/>
        <end position="385"/>
    </location>
</feature>
<protein>
    <recommendedName>
        <fullName>Fetuin-B</fullName>
    </recommendedName>
    <alternativeName>
        <fullName>Fetuin-like protein IRL685</fullName>
    </alternativeName>
</protein>
<reference key="1">
    <citation type="journal article" date="2000" name="Biochem. J.">
        <title>Fetuin-B, a second member of the fetuin family in mammals.</title>
        <authorList>
            <person name="Olivier E."/>
            <person name="Soury E."/>
            <person name="Ruminy P."/>
            <person name="Husson A."/>
            <person name="Parmentier F."/>
            <person name="Daveau M."/>
            <person name="Salier J.-P."/>
        </authorList>
    </citation>
    <scope>NUCLEOTIDE SEQUENCE [MRNA]</scope>
    <source>
        <strain>C57BL/6J</strain>
        <tissue>Liver</tissue>
    </source>
</reference>
<reference key="2">
    <citation type="journal article" date="2004" name="Genome Res.">
        <title>The status, quality, and expansion of the NIH full-length cDNA project: the Mammalian Gene Collection (MGC).</title>
        <authorList>
            <consortium name="The MGC Project Team"/>
        </authorList>
    </citation>
    <scope>NUCLEOTIDE SEQUENCE [LARGE SCALE MRNA]</scope>
    <source>
        <strain>FVB/N</strain>
        <tissue>Liver</tissue>
    </source>
</reference>
<reference key="3">
    <citation type="journal article" date="2007" name="J. Proteome Res.">
        <title>Enhanced analysis of the mouse plasma proteome using cysteine-containing tryptic glycopeptides.</title>
        <authorList>
            <person name="Bernhard O.K."/>
            <person name="Kapp E.A."/>
            <person name="Simpson R.J."/>
        </authorList>
    </citation>
    <scope>GLYCOSYLATION [LARGE SCALE ANALYSIS] AT ASN-139</scope>
    <source>
        <strain>C57BL/6J</strain>
        <tissue>Plasma</tissue>
    </source>
</reference>
<reference key="4">
    <citation type="journal article" date="2010" name="Cell">
        <title>A tissue-specific atlas of mouse protein phosphorylation and expression.</title>
        <authorList>
            <person name="Huttlin E.L."/>
            <person name="Jedrychowski M.P."/>
            <person name="Elias J.E."/>
            <person name="Goswami T."/>
            <person name="Rad R."/>
            <person name="Beausoleil S.A."/>
            <person name="Villen J."/>
            <person name="Haas W."/>
            <person name="Sowa M.E."/>
            <person name="Gygi S.P."/>
        </authorList>
    </citation>
    <scope>IDENTIFICATION BY MASS SPECTROMETRY [LARGE SCALE ANALYSIS]</scope>
    <source>
        <tissue>Brown adipose tissue</tissue>
        <tissue>Heart</tissue>
        <tissue>Kidney</tissue>
        <tissue>Liver</tissue>
        <tissue>Lung</tissue>
        <tissue>Spleen</tissue>
        <tissue>Testis</tissue>
    </source>
</reference>
<reference key="5">
    <citation type="journal article" date="2013" name="Dev. Cell">
        <title>Fetuin-B, a liver-derived plasma protein is essential for fertilization.</title>
        <authorList>
            <person name="Dietzel E."/>
            <person name="Wessling J."/>
            <person name="Floehr J."/>
            <person name="Schafer C."/>
            <person name="Ensslen S."/>
            <person name="Denecke B."/>
            <person name="Rosing B."/>
            <person name="Neulen J."/>
            <person name="Veitinger T."/>
            <person name="Spehr M."/>
            <person name="Tropartz T."/>
            <person name="Tolba R."/>
            <person name="Renne T."/>
            <person name="Egert A."/>
            <person name="Schorle H."/>
            <person name="Gottenbusch Y."/>
            <person name="Hildebrand A."/>
            <person name="Yiallouros I."/>
            <person name="Stocker W."/>
            <person name="Weiskirchen R."/>
            <person name="Jahnen-Dechent W."/>
        </authorList>
    </citation>
    <scope>FUNCTION</scope>
    <scope>DISRUPTION PHENOTYPE</scope>
    <scope>SUBCELLULAR LOCATION</scope>
</reference>
<keyword id="KW-0002">3D-structure</keyword>
<keyword id="KW-1015">Disulfide bond</keyword>
<keyword id="KW-0278">Fertilization</keyword>
<keyword id="KW-0325">Glycoprotein</keyword>
<keyword id="KW-0481">Metalloenzyme inhibitor</keyword>
<keyword id="KW-0483">Metalloprotease inhibitor</keyword>
<keyword id="KW-0597">Phosphoprotein</keyword>
<keyword id="KW-0646">Protease inhibitor</keyword>
<keyword id="KW-1185">Reference proteome</keyword>
<keyword id="KW-0677">Repeat</keyword>
<keyword id="KW-0964">Secreted</keyword>
<keyword id="KW-0732">Signal</keyword>
<proteinExistence type="evidence at protein level"/>